<accession>Q53ZE5</accession>
<accession>P54321</accession>
<organism>
    <name type="scientific">Lactococcus lactis subsp. cremoris</name>
    <name type="common">Streptococcus cremoris</name>
    <dbReference type="NCBI Taxonomy" id="1359"/>
    <lineage>
        <taxon>Bacteria</taxon>
        <taxon>Bacillati</taxon>
        <taxon>Bacillota</taxon>
        <taxon>Bacilli</taxon>
        <taxon>Lactobacillales</taxon>
        <taxon>Streptococcaceae</taxon>
        <taxon>Lactococcus</taxon>
    </lineage>
</organism>
<feature type="chain" id="PRO_0000148394" description="Dihydroorotate dehydrogenase A (fumarate)">
    <location>
        <begin position="1"/>
        <end position="311"/>
    </location>
</feature>
<feature type="active site" description="Nucleophile">
    <location>
        <position position="130"/>
    </location>
</feature>
<feature type="binding site" evidence="1">
    <location>
        <position position="19"/>
    </location>
    <ligand>
        <name>FMN</name>
        <dbReference type="ChEBI" id="CHEBI:58210"/>
    </ligand>
</feature>
<feature type="binding site" evidence="1">
    <location>
        <begin position="43"/>
        <end position="44"/>
    </location>
    <ligand>
        <name>FMN</name>
        <dbReference type="ChEBI" id="CHEBI:58210"/>
    </ligand>
</feature>
<feature type="binding site" evidence="1">
    <location>
        <position position="43"/>
    </location>
    <ligand>
        <name>substrate</name>
    </ligand>
</feature>
<feature type="binding site" evidence="1">
    <location>
        <begin position="67"/>
        <end position="71"/>
    </location>
    <ligand>
        <name>substrate</name>
    </ligand>
</feature>
<feature type="binding site" evidence="1">
    <location>
        <position position="127"/>
    </location>
    <ligand>
        <name>FMN</name>
        <dbReference type="ChEBI" id="CHEBI:58210"/>
    </ligand>
</feature>
<feature type="binding site" evidence="1">
    <location>
        <position position="127"/>
    </location>
    <ligand>
        <name>substrate</name>
    </ligand>
</feature>
<feature type="binding site" evidence="1">
    <location>
        <position position="164"/>
    </location>
    <ligand>
        <name>FMN</name>
        <dbReference type="ChEBI" id="CHEBI:58210"/>
    </ligand>
</feature>
<feature type="binding site" evidence="1">
    <location>
        <position position="192"/>
    </location>
    <ligand>
        <name>FMN</name>
        <dbReference type="ChEBI" id="CHEBI:58210"/>
    </ligand>
</feature>
<feature type="binding site" evidence="1">
    <location>
        <begin position="193"/>
        <end position="194"/>
    </location>
    <ligand>
        <name>substrate</name>
    </ligand>
</feature>
<feature type="binding site" evidence="1">
    <location>
        <position position="221"/>
    </location>
    <ligand>
        <name>FMN</name>
        <dbReference type="ChEBI" id="CHEBI:58210"/>
    </ligand>
</feature>
<feature type="binding site" evidence="1">
    <location>
        <begin position="249"/>
        <end position="250"/>
    </location>
    <ligand>
        <name>FMN</name>
        <dbReference type="ChEBI" id="CHEBI:58210"/>
    </ligand>
</feature>
<feature type="binding site" evidence="1">
    <location>
        <begin position="271"/>
        <end position="272"/>
    </location>
    <ligand>
        <name>FMN</name>
        <dbReference type="ChEBI" id="CHEBI:58210"/>
    </ligand>
</feature>
<dbReference type="EC" id="1.3.98.1"/>
<dbReference type="EMBL" id="AY323899">
    <property type="protein sequence ID" value="AAQ01776.1"/>
    <property type="molecule type" value="Genomic_DNA"/>
</dbReference>
<dbReference type="RefSeq" id="WP_011834894.1">
    <property type="nucleotide sequence ID" value="NZ_VERW01000005.1"/>
</dbReference>
<dbReference type="SMR" id="Q53ZE5"/>
<dbReference type="DrugBank" id="DB03247">
    <property type="generic name" value="Flavin mononucleotide"/>
</dbReference>
<dbReference type="DrugBank" id="DB02262">
    <property type="generic name" value="Orotic acid"/>
</dbReference>
<dbReference type="PATRIC" id="fig|1359.23.peg.1510"/>
<dbReference type="OMA" id="FDFAHFD"/>
<dbReference type="UniPathway" id="UPA00070"/>
<dbReference type="GO" id="GO:0005737">
    <property type="term" value="C:cytoplasm"/>
    <property type="evidence" value="ECO:0007669"/>
    <property type="project" value="UniProtKB-SubCell"/>
</dbReference>
<dbReference type="GO" id="GO:1990663">
    <property type="term" value="F:dihydroorotate dehydrogenase (fumarate) activity"/>
    <property type="evidence" value="ECO:0007669"/>
    <property type="project" value="UniProtKB-EC"/>
</dbReference>
<dbReference type="GO" id="GO:0006207">
    <property type="term" value="P:'de novo' pyrimidine nucleobase biosynthetic process"/>
    <property type="evidence" value="ECO:0007669"/>
    <property type="project" value="InterPro"/>
</dbReference>
<dbReference type="GO" id="GO:0044205">
    <property type="term" value="P:'de novo' UMP biosynthetic process"/>
    <property type="evidence" value="ECO:0007669"/>
    <property type="project" value="UniProtKB-UniRule"/>
</dbReference>
<dbReference type="CDD" id="cd04741">
    <property type="entry name" value="DHOD_1A_like"/>
    <property type="match status" value="1"/>
</dbReference>
<dbReference type="FunFam" id="3.20.20.70:FF:000027">
    <property type="entry name" value="Dihydropyrimidine dehydrogenase [NADP(+)]"/>
    <property type="match status" value="1"/>
</dbReference>
<dbReference type="Gene3D" id="3.20.20.70">
    <property type="entry name" value="Aldolase class I"/>
    <property type="match status" value="1"/>
</dbReference>
<dbReference type="Gene3D" id="2.30.26.10">
    <property type="entry name" value="Dihydroorotate Dehydrogenase A, chain A, domain 2"/>
    <property type="match status" value="1"/>
</dbReference>
<dbReference type="HAMAP" id="MF_00224">
    <property type="entry name" value="DHO_dh_type1"/>
    <property type="match status" value="1"/>
</dbReference>
<dbReference type="InterPro" id="IPR013785">
    <property type="entry name" value="Aldolase_TIM"/>
</dbReference>
<dbReference type="InterPro" id="IPR050074">
    <property type="entry name" value="DHO_dehydrogenase"/>
</dbReference>
<dbReference type="InterPro" id="IPR033886">
    <property type="entry name" value="DHOD_1A"/>
</dbReference>
<dbReference type="InterPro" id="IPR023359">
    <property type="entry name" value="Dihydro_DH_chainA_dom2"/>
</dbReference>
<dbReference type="InterPro" id="IPR024920">
    <property type="entry name" value="Dihydroorotate_DH_1"/>
</dbReference>
<dbReference type="InterPro" id="IPR012135">
    <property type="entry name" value="Dihydroorotate_DH_1_2"/>
</dbReference>
<dbReference type="InterPro" id="IPR005720">
    <property type="entry name" value="Dihydroorotate_DH_cat"/>
</dbReference>
<dbReference type="InterPro" id="IPR001295">
    <property type="entry name" value="Dihydroorotate_DH_CS"/>
</dbReference>
<dbReference type="NCBIfam" id="NF002702">
    <property type="entry name" value="PRK02506.1"/>
    <property type="match status" value="1"/>
</dbReference>
<dbReference type="PANTHER" id="PTHR48109:SF1">
    <property type="entry name" value="DIHYDROOROTATE DEHYDROGENASE (FUMARATE)"/>
    <property type="match status" value="1"/>
</dbReference>
<dbReference type="PANTHER" id="PTHR48109">
    <property type="entry name" value="DIHYDROOROTATE DEHYDROGENASE (QUINONE), MITOCHONDRIAL-RELATED"/>
    <property type="match status" value="1"/>
</dbReference>
<dbReference type="Pfam" id="PF01180">
    <property type="entry name" value="DHO_dh"/>
    <property type="match status" value="1"/>
</dbReference>
<dbReference type="PIRSF" id="PIRSF000164">
    <property type="entry name" value="DHO_oxidase"/>
    <property type="match status" value="1"/>
</dbReference>
<dbReference type="SUPFAM" id="SSF51395">
    <property type="entry name" value="FMN-linked oxidoreductases"/>
    <property type="match status" value="1"/>
</dbReference>
<dbReference type="PROSITE" id="PS00911">
    <property type="entry name" value="DHODEHASE_1"/>
    <property type="match status" value="1"/>
</dbReference>
<dbReference type="PROSITE" id="PS00912">
    <property type="entry name" value="DHODEHASE_2"/>
    <property type="match status" value="1"/>
</dbReference>
<sequence length="311" mass="34210">MLNTTFANAKFANPFMNASGVHCMTIEDLEELKASQAGAYITKSSTLEKREGNPLPRYVDLELGSINSMGLPNLGFDYYLDYVLKNQKENAQEGPIFFSIAGMSAAENIAMLKKIQESDFSGITELNLSCPNVPGKPQLAYDFEATEKLLKEVFTFFTKPLGVKLPPYFDLVHFDIMAEILNQFPLTYVNSVNSIGNGLFIDPEAESVVIKPKDGFGGIGGAYIKPTALANVRAFYTRLKPEIQIIGTGGIETGQDAFEHLLCGATMLQIGTALHKEGPAIFDRIIKELEEIMNQKGYQSIADFHGKLKSL</sequence>
<comment type="function">
    <text evidence="1">Catalyzes the conversion of dihydroorotate to orotate with fumarate as the electron acceptor.</text>
</comment>
<comment type="catalytic activity">
    <reaction>
        <text>(S)-dihydroorotate + fumarate = orotate + succinate</text>
        <dbReference type="Rhea" id="RHEA:30059"/>
        <dbReference type="ChEBI" id="CHEBI:29806"/>
        <dbReference type="ChEBI" id="CHEBI:30031"/>
        <dbReference type="ChEBI" id="CHEBI:30839"/>
        <dbReference type="ChEBI" id="CHEBI:30864"/>
        <dbReference type="EC" id="1.3.98.1"/>
    </reaction>
</comment>
<comment type="cofactor">
    <cofactor evidence="1">
        <name>FMN</name>
        <dbReference type="ChEBI" id="CHEBI:58210"/>
    </cofactor>
    <text evidence="1">Binds 1 FMN per subunit.</text>
</comment>
<comment type="pathway">
    <text>Pyrimidine metabolism; UMP biosynthesis via de novo pathway.</text>
</comment>
<comment type="subunit">
    <text evidence="1">Homodimer.</text>
</comment>
<comment type="subcellular location">
    <subcellularLocation>
        <location evidence="1">Cytoplasm</location>
    </subcellularLocation>
</comment>
<comment type="similarity">
    <text evidence="2">Belongs to the dihydroorotate dehydrogenase family. Type 1 subfamily.</text>
</comment>
<keyword id="KW-0963">Cytoplasm</keyword>
<keyword id="KW-0285">Flavoprotein</keyword>
<keyword id="KW-0288">FMN</keyword>
<keyword id="KW-0560">Oxidoreductase</keyword>
<keyword id="KW-0665">Pyrimidine biosynthesis</keyword>
<name>PYRDA_LACLC</name>
<gene>
    <name type="primary">pyrDA</name>
</gene>
<reference key="1">
    <citation type="submission" date="2003-06" db="EMBL/GenBank/DDBJ databases">
        <title>Lactococcus lactis subsp. cremoris gene encoding the biosynthetic enzyme dihydroorotate dehydrogenase family 1a.</title>
        <authorList>
            <person name="Hall C.R."/>
            <person name="Dietrich F.S."/>
        </authorList>
    </citation>
    <scope>NUCLEOTIDE SEQUENCE [GENOMIC DNA]</scope>
    <source>
        <strain>NCK436</strain>
    </source>
</reference>
<protein>
    <recommendedName>
        <fullName>Dihydroorotate dehydrogenase A (fumarate)</fullName>
        <shortName>DHOD A</shortName>
        <shortName>DHODase A</shortName>
        <shortName>DHOdehase A</shortName>
        <ecNumber>1.3.98.1</ecNumber>
    </recommendedName>
</protein>
<evidence type="ECO:0000250" key="1"/>
<evidence type="ECO:0000305" key="2"/>
<proteinExistence type="inferred from homology"/>